<sequence length="85" mass="9387">MCILIVAVLFLTAWTFVMADDPRDEPDTVVRGGKLFSRARDEMNPAASKLNERDCVEVDYFCGIPFVFNGLCCSGNCVFVCTPQG</sequence>
<evidence type="ECO:0000250" key="1">
    <source>
        <dbReference type="UniProtKB" id="P56712"/>
    </source>
</evidence>
<evidence type="ECO:0000250" key="2">
    <source>
        <dbReference type="UniProtKB" id="Q26443"/>
    </source>
</evidence>
<evidence type="ECO:0000255" key="3"/>
<evidence type="ECO:0000269" key="4">
    <source>
    </source>
</evidence>
<evidence type="ECO:0000305" key="5"/>
<evidence type="ECO:0000305" key="6">
    <source>
    </source>
</evidence>
<comment type="function">
    <text evidence="1">Omega-conotoxins act at presynaptic membranes, they bind and block voltage-gated calcium channels (Cav).</text>
</comment>
<comment type="subcellular location">
    <subcellularLocation>
        <location evidence="4">Secreted</location>
    </subcellularLocation>
</comment>
<comment type="tissue specificity">
    <text evidence="6">Expressed by the venom duct.</text>
</comment>
<comment type="domain">
    <text evidence="5">The cysteine framework is VI/VII (C-C-CC-C-C).</text>
</comment>
<comment type="domain">
    <text evidence="5">The presence of a 'disulfide through disulfide knot' structurally defines this protein as a knottin.</text>
</comment>
<comment type="PTM">
    <text evidence="4">Is not hydroxylated.</text>
</comment>
<comment type="similarity">
    <text evidence="5">Belongs to the conotoxin O1 family.</text>
</comment>
<accession>A0A3G3C7U7</accession>
<dbReference type="EMBL" id="MH282825">
    <property type="protein sequence ID" value="AYP73032.1"/>
    <property type="molecule type" value="mRNA"/>
</dbReference>
<dbReference type="SMR" id="A0A3G3C7U7"/>
<dbReference type="GO" id="GO:0005576">
    <property type="term" value="C:extracellular region"/>
    <property type="evidence" value="ECO:0007669"/>
    <property type="project" value="UniProtKB-SubCell"/>
</dbReference>
<dbReference type="GO" id="GO:0005246">
    <property type="term" value="F:calcium channel regulator activity"/>
    <property type="evidence" value="ECO:0007669"/>
    <property type="project" value="UniProtKB-KW"/>
</dbReference>
<dbReference type="GO" id="GO:0008200">
    <property type="term" value="F:ion channel inhibitor activity"/>
    <property type="evidence" value="ECO:0007669"/>
    <property type="project" value="InterPro"/>
</dbReference>
<dbReference type="GO" id="GO:0090729">
    <property type="term" value="F:toxin activity"/>
    <property type="evidence" value="ECO:0007669"/>
    <property type="project" value="UniProtKB-KW"/>
</dbReference>
<dbReference type="InterPro" id="IPR004214">
    <property type="entry name" value="Conotoxin"/>
</dbReference>
<dbReference type="InterPro" id="IPR012321">
    <property type="entry name" value="Conotoxin_omega-typ_CS"/>
</dbReference>
<dbReference type="Pfam" id="PF02950">
    <property type="entry name" value="Conotoxin"/>
    <property type="match status" value="1"/>
</dbReference>
<dbReference type="SUPFAM" id="SSF57059">
    <property type="entry name" value="omega toxin-like"/>
    <property type="match status" value="1"/>
</dbReference>
<dbReference type="PROSITE" id="PS60004">
    <property type="entry name" value="OMEGA_CONOTOXIN"/>
    <property type="match status" value="1"/>
</dbReference>
<organism>
    <name type="scientific">Conus amadis</name>
    <name type="common">Amadis cone</name>
    <dbReference type="NCBI Taxonomy" id="198732"/>
    <lineage>
        <taxon>Eukaryota</taxon>
        <taxon>Metazoa</taxon>
        <taxon>Spiralia</taxon>
        <taxon>Lophotrochozoa</taxon>
        <taxon>Mollusca</taxon>
        <taxon>Gastropoda</taxon>
        <taxon>Caenogastropoda</taxon>
        <taxon>Neogastropoda</taxon>
        <taxon>Conoidea</taxon>
        <taxon>Conidae</taxon>
        <taxon>Conus</taxon>
        <taxon>Leptoconus</taxon>
    </lineage>
</organism>
<feature type="signal peptide" evidence="3">
    <location>
        <begin position="1"/>
        <end position="19"/>
    </location>
</feature>
<feature type="propeptide" id="PRO_0000453602" evidence="6">
    <location>
        <begin position="20"/>
        <end position="53"/>
    </location>
</feature>
<feature type="peptide" id="PRO_5018127180" description="Omega-conotoxin-like Am6.5" evidence="4">
    <location>
        <begin position="54"/>
        <end position="84"/>
    </location>
</feature>
<feature type="modified residue" description="Glutamine amide" evidence="4">
    <location>
        <position position="84"/>
    </location>
</feature>
<feature type="disulfide bond" evidence="2">
    <location>
        <begin position="55"/>
        <end position="73"/>
    </location>
</feature>
<feature type="disulfide bond" evidence="2">
    <location>
        <begin position="62"/>
        <end position="77"/>
    </location>
</feature>
<feature type="disulfide bond" evidence="2">
    <location>
        <begin position="72"/>
        <end position="81"/>
    </location>
</feature>
<reference key="1">
    <citation type="journal article" date="2019" name="J. Proteomics">
        <title>Cone snail prolyl-4-hydroxylase alpha-subunit sequences derived from transcriptomic data and mass spectrometric analysis of variable proline hydroxylation in C. amadis venom.</title>
        <authorList>
            <person name="Vijayasarathy M."/>
            <person name="Balaram P."/>
        </authorList>
    </citation>
    <scope>NUCLEOTIDE SEQUENCE [MRNA]</scope>
    <scope>PROTEIN SEQUENCE OF 54-84</scope>
    <scope>SUBCELLULAR LOCATION</scope>
    <scope>IDENTIFICATION BY MASS SPECTROMETRY</scope>
    <scope>AMIDATION AT GLN-84</scope>
    <source>
        <tissue>Venom</tissue>
        <tissue>Venom duct</tissue>
    </source>
</reference>
<proteinExistence type="evidence at protein level"/>
<keyword id="KW-0027">Amidation</keyword>
<keyword id="KW-0108">Calcium channel impairing toxin</keyword>
<keyword id="KW-0903">Direct protein sequencing</keyword>
<keyword id="KW-1015">Disulfide bond</keyword>
<keyword id="KW-0872">Ion channel impairing toxin</keyword>
<keyword id="KW-0960">Knottin</keyword>
<keyword id="KW-0964">Secreted</keyword>
<keyword id="KW-0732">Signal</keyword>
<keyword id="KW-0800">Toxin</keyword>
<keyword id="KW-1218">Voltage-gated calcium channel impairing toxin</keyword>
<protein>
    <recommendedName>
        <fullName evidence="5">Omega-conotoxin-like Am6.5</fullName>
    </recommendedName>
</protein>
<name>O165_CONAA</name>